<comment type="function">
    <text evidence="1">Essential for ribosome biogenesis.</text>
</comment>
<comment type="similarity">
    <text evidence="6">Belongs to the LTV1 family.</text>
</comment>
<dbReference type="EMBL" id="CR859841">
    <property type="protein sequence ID" value="CAH91998.1"/>
    <property type="molecule type" value="mRNA"/>
</dbReference>
<dbReference type="RefSeq" id="NP_001128984.1">
    <property type="nucleotide sequence ID" value="NM_001135512.1"/>
</dbReference>
<dbReference type="SMR" id="Q5R8B2"/>
<dbReference type="FunCoup" id="Q5R8B2">
    <property type="interactions" value="3066"/>
</dbReference>
<dbReference type="STRING" id="9601.ENSPPYP00000019109"/>
<dbReference type="GeneID" id="100190824"/>
<dbReference type="KEGG" id="pon:100190824"/>
<dbReference type="CTD" id="84946"/>
<dbReference type="eggNOG" id="KOG2637">
    <property type="taxonomic scope" value="Eukaryota"/>
</dbReference>
<dbReference type="InParanoid" id="Q5R8B2"/>
<dbReference type="OrthoDB" id="5852896at2759"/>
<dbReference type="Proteomes" id="UP000001595">
    <property type="component" value="Unplaced"/>
</dbReference>
<dbReference type="GO" id="GO:0005829">
    <property type="term" value="C:cytosol"/>
    <property type="evidence" value="ECO:0007669"/>
    <property type="project" value="TreeGrafter"/>
</dbReference>
<dbReference type="GO" id="GO:0005634">
    <property type="term" value="C:nucleus"/>
    <property type="evidence" value="ECO:0007669"/>
    <property type="project" value="TreeGrafter"/>
</dbReference>
<dbReference type="GO" id="GO:0030688">
    <property type="term" value="C:preribosome, small subunit precursor"/>
    <property type="evidence" value="ECO:0007669"/>
    <property type="project" value="TreeGrafter"/>
</dbReference>
<dbReference type="GO" id="GO:0042274">
    <property type="term" value="P:ribosomal small subunit biogenesis"/>
    <property type="evidence" value="ECO:0007669"/>
    <property type="project" value="InterPro"/>
</dbReference>
<dbReference type="GO" id="GO:0000056">
    <property type="term" value="P:ribosomal small subunit export from nucleus"/>
    <property type="evidence" value="ECO:0007669"/>
    <property type="project" value="TreeGrafter"/>
</dbReference>
<dbReference type="GO" id="GO:0042254">
    <property type="term" value="P:ribosome biogenesis"/>
    <property type="evidence" value="ECO:0000250"/>
    <property type="project" value="UniProtKB"/>
</dbReference>
<dbReference type="InterPro" id="IPR007307">
    <property type="entry name" value="Ltv1"/>
</dbReference>
<dbReference type="PANTHER" id="PTHR21531">
    <property type="entry name" value="LOW-TEMPERATURE VIABILITY PROTEIN LTV1-RELATED"/>
    <property type="match status" value="1"/>
</dbReference>
<dbReference type="PANTHER" id="PTHR21531:SF0">
    <property type="entry name" value="PROTEIN LTV1 HOMOLOG"/>
    <property type="match status" value="1"/>
</dbReference>
<dbReference type="Pfam" id="PF04180">
    <property type="entry name" value="LTV"/>
    <property type="match status" value="2"/>
</dbReference>
<name>LTV1_PONAB</name>
<proteinExistence type="evidence at transcript level"/>
<accession>Q5R8B2</accession>
<organism>
    <name type="scientific">Pongo abelii</name>
    <name type="common">Sumatran orangutan</name>
    <name type="synonym">Pongo pygmaeus abelii</name>
    <dbReference type="NCBI Taxonomy" id="9601"/>
    <lineage>
        <taxon>Eukaryota</taxon>
        <taxon>Metazoa</taxon>
        <taxon>Chordata</taxon>
        <taxon>Craniata</taxon>
        <taxon>Vertebrata</taxon>
        <taxon>Euteleostomi</taxon>
        <taxon>Mammalia</taxon>
        <taxon>Eutheria</taxon>
        <taxon>Euarchontoglires</taxon>
        <taxon>Primates</taxon>
        <taxon>Haplorrhini</taxon>
        <taxon>Catarrhini</taxon>
        <taxon>Hominidae</taxon>
        <taxon>Pongo</taxon>
    </lineage>
</organism>
<evidence type="ECO:0000250" key="1">
    <source>
        <dbReference type="UniProtKB" id="Q5U3J8"/>
    </source>
</evidence>
<evidence type="ECO:0000250" key="2">
    <source>
        <dbReference type="UniProtKB" id="Q6NSQ7"/>
    </source>
</evidence>
<evidence type="ECO:0000250" key="3">
    <source>
        <dbReference type="UniProtKB" id="Q96GA3"/>
    </source>
</evidence>
<evidence type="ECO:0000255" key="4"/>
<evidence type="ECO:0000256" key="5">
    <source>
        <dbReference type="SAM" id="MobiDB-lite"/>
    </source>
</evidence>
<evidence type="ECO:0000305" key="6"/>
<gene>
    <name type="primary">LTV1</name>
</gene>
<sequence length="475" mass="54855">MPHRKKKPFIEKKKAVSFHLVHRSQRDPLAADESAPQRVLLPTQKIDNEERRAEQRKYGVFFDDDYDYLQHLKEPSGPSELIPSSTFSAHNRREEKEETLVIPSTGIKLPSSVFASEFEEDVGLLNKAAPVSGPRLDFDPDIVAALDDDFDFDDPDNLLEDDFILQANKATGEEEGMDIQKSENEDDSEWEDVDDEKGDSNDDYDSAGLLSDEDCMSVPGKTHRAIADHLFWSEETKSRFTEYSMTSSVMRRNEQLTLHDERFEKFYEQYDDDEIGALDNAELEGSIQVDSNRLQEVLNDYYKEKAENCVKLNTLEPLEDQDLPMNELDESEEEEMITVVLEEAKEKWDCESICSTYSNLYNHPQLIKYQPKPKQIRISSKTGIPLNVLPKKGLTAKQTERIQMINGSDLPKVSTQPRSKNESKEDKRARKQAIKEERKERRVEKKANKLAFKLEKRRQEKELLNLKKNVEGLKL</sequence>
<feature type="chain" id="PRO_0000302815" description="Protein LTV1 homolog">
    <location>
        <begin position="1"/>
        <end position="475"/>
    </location>
</feature>
<feature type="region of interest" description="Disordered" evidence="5">
    <location>
        <begin position="23"/>
        <end position="54"/>
    </location>
</feature>
<feature type="region of interest" description="Disordered" evidence="5">
    <location>
        <begin position="74"/>
        <end position="99"/>
    </location>
</feature>
<feature type="region of interest" description="Disordered" evidence="5">
    <location>
        <begin position="169"/>
        <end position="213"/>
    </location>
</feature>
<feature type="region of interest" description="Disordered" evidence="5">
    <location>
        <begin position="405"/>
        <end position="447"/>
    </location>
</feature>
<feature type="coiled-coil region" evidence="4">
    <location>
        <begin position="418"/>
        <end position="475"/>
    </location>
</feature>
<feature type="compositionally biased region" description="Acidic residues" evidence="5">
    <location>
        <begin position="184"/>
        <end position="213"/>
    </location>
</feature>
<feature type="compositionally biased region" description="Basic and acidic residues" evidence="5">
    <location>
        <begin position="419"/>
        <end position="447"/>
    </location>
</feature>
<feature type="modified residue" description="Phosphoserine" evidence="3">
    <location>
        <position position="17"/>
    </location>
</feature>
<feature type="modified residue" description="Phosphoserine" evidence="3">
    <location>
        <position position="24"/>
    </location>
</feature>
<feature type="modified residue" description="Phosphoserine" evidence="2">
    <location>
        <position position="248"/>
    </location>
</feature>
<feature type="modified residue" description="Phosphoserine" evidence="3">
    <location>
        <position position="331"/>
    </location>
</feature>
<feature type="modified residue" description="Phosphoserine" evidence="3">
    <location>
        <position position="408"/>
    </location>
</feature>
<keyword id="KW-0175">Coiled coil</keyword>
<keyword id="KW-0597">Phosphoprotein</keyword>
<keyword id="KW-1185">Reference proteome</keyword>
<keyword id="KW-0690">Ribosome biogenesis</keyword>
<reference key="1">
    <citation type="submission" date="2004-11" db="EMBL/GenBank/DDBJ databases">
        <authorList>
            <consortium name="The German cDNA consortium"/>
        </authorList>
    </citation>
    <scope>NUCLEOTIDE SEQUENCE [LARGE SCALE MRNA]</scope>
    <source>
        <tissue>Heart</tissue>
    </source>
</reference>
<protein>
    <recommendedName>
        <fullName>Protein LTV1 homolog</fullName>
    </recommendedName>
</protein>